<dbReference type="EC" id="4.6.1.16" evidence="1"/>
<dbReference type="EMBL" id="AF001577">
    <property type="protein sequence ID" value="AAC45445.1"/>
    <property type="molecule type" value="Genomic_DNA"/>
</dbReference>
<dbReference type="EMBL" id="AE000666">
    <property type="protein sequence ID" value="AAB84756.1"/>
    <property type="molecule type" value="Genomic_DNA"/>
</dbReference>
<dbReference type="PIR" id="D69131">
    <property type="entry name" value="D69131"/>
</dbReference>
<dbReference type="SMR" id="O07165"/>
<dbReference type="IntAct" id="O07165">
    <property type="interactions" value="1"/>
</dbReference>
<dbReference type="STRING" id="187420.MTH_250"/>
<dbReference type="PaxDb" id="187420-MTH_250"/>
<dbReference type="EnsemblBacteria" id="AAB84756">
    <property type="protein sequence ID" value="AAB84756"/>
    <property type="gene ID" value="MTH_250"/>
</dbReference>
<dbReference type="KEGG" id="mth:MTH_250"/>
<dbReference type="PATRIC" id="fig|187420.15.peg.219"/>
<dbReference type="HOGENOM" id="CLU_114393_0_0_2"/>
<dbReference type="InParanoid" id="O07165"/>
<dbReference type="Proteomes" id="UP000005223">
    <property type="component" value="Chromosome"/>
</dbReference>
<dbReference type="GO" id="GO:0005737">
    <property type="term" value="C:cytoplasm"/>
    <property type="evidence" value="ECO:0007669"/>
    <property type="project" value="TreeGrafter"/>
</dbReference>
<dbReference type="GO" id="GO:0016829">
    <property type="term" value="F:lyase activity"/>
    <property type="evidence" value="ECO:0007669"/>
    <property type="project" value="UniProtKB-KW"/>
</dbReference>
<dbReference type="GO" id="GO:0003676">
    <property type="term" value="F:nucleic acid binding"/>
    <property type="evidence" value="ECO:0007669"/>
    <property type="project" value="InterPro"/>
</dbReference>
<dbReference type="GO" id="GO:0000213">
    <property type="term" value="F:tRNA-intron endonuclease activity"/>
    <property type="evidence" value="ECO:0007669"/>
    <property type="project" value="UniProtKB-UniRule"/>
</dbReference>
<dbReference type="GO" id="GO:0006388">
    <property type="term" value="P:tRNA splicing, via endonucleolytic cleavage and ligation"/>
    <property type="evidence" value="ECO:0007669"/>
    <property type="project" value="UniProtKB-UniRule"/>
</dbReference>
<dbReference type="CDD" id="cd22363">
    <property type="entry name" value="tRNA-intron_lyase_C"/>
    <property type="match status" value="1"/>
</dbReference>
<dbReference type="FunFam" id="3.40.1350.10:FF:000006">
    <property type="entry name" value="tRNA-splicing endonuclease"/>
    <property type="match status" value="1"/>
</dbReference>
<dbReference type="Gene3D" id="3.40.1350.10">
    <property type="match status" value="1"/>
</dbReference>
<dbReference type="Gene3D" id="3.40.1170.20">
    <property type="entry name" value="tRNA intron endonuclease, N-terminal domain"/>
    <property type="match status" value="1"/>
</dbReference>
<dbReference type="HAMAP" id="MF_01833">
    <property type="entry name" value="EndA_short"/>
    <property type="match status" value="1"/>
</dbReference>
<dbReference type="InterPro" id="IPR011856">
    <property type="entry name" value="tRNA_endonuc-like_dom_sf"/>
</dbReference>
<dbReference type="InterPro" id="IPR036167">
    <property type="entry name" value="tRNA_intron_Endo_cat-like_sf"/>
</dbReference>
<dbReference type="InterPro" id="IPR006677">
    <property type="entry name" value="tRNA_intron_Endonuc_cat-like"/>
</dbReference>
<dbReference type="InterPro" id="IPR006678">
    <property type="entry name" value="tRNA_intron_Endonuc_N"/>
</dbReference>
<dbReference type="InterPro" id="IPR036740">
    <property type="entry name" value="tRNA_intron_Endonuc_N_sf"/>
</dbReference>
<dbReference type="InterPro" id="IPR006676">
    <property type="entry name" value="tRNA_splic"/>
</dbReference>
<dbReference type="InterPro" id="IPR016442">
    <property type="entry name" value="tRNA_splic_arch_short"/>
</dbReference>
<dbReference type="NCBIfam" id="TIGR00324">
    <property type="entry name" value="endA"/>
    <property type="match status" value="1"/>
</dbReference>
<dbReference type="PANTHER" id="PTHR21227">
    <property type="entry name" value="TRNA-SPLICING ENDONUCLEASE SUBUNIT SEN2"/>
    <property type="match status" value="1"/>
</dbReference>
<dbReference type="PANTHER" id="PTHR21227:SF0">
    <property type="entry name" value="TRNA-SPLICING ENDONUCLEASE SUBUNIT SEN2"/>
    <property type="match status" value="1"/>
</dbReference>
<dbReference type="Pfam" id="PF01974">
    <property type="entry name" value="tRNA_int_endo"/>
    <property type="match status" value="1"/>
</dbReference>
<dbReference type="Pfam" id="PF02778">
    <property type="entry name" value="tRNA_int_endo_N"/>
    <property type="match status" value="1"/>
</dbReference>
<dbReference type="PIRSF" id="PIRSF005285">
    <property type="entry name" value="tRNA_splic_archaea"/>
    <property type="match status" value="1"/>
</dbReference>
<dbReference type="SUPFAM" id="SSF53032">
    <property type="entry name" value="tRNA-intron endonuclease catalytic domain-like"/>
    <property type="match status" value="1"/>
</dbReference>
<dbReference type="SUPFAM" id="SSF55267">
    <property type="entry name" value="tRNA-intron endonuclease N-terminal domain-like"/>
    <property type="match status" value="1"/>
</dbReference>
<protein>
    <recommendedName>
        <fullName evidence="1">tRNA-splicing endonuclease</fullName>
        <ecNumber evidence="1">4.6.1.16</ecNumber>
    </recommendedName>
    <alternativeName>
        <fullName evidence="1">tRNA-intron endonuclease</fullName>
    </alternativeName>
</protein>
<name>ENDA_METTH</name>
<sequence length="170" mass="19693">MRVEGQLGDEVVTIKATSIARRLHGKSHYGKMYEDRLQLSLIEAAYLMERGKLKLMKDDDEVSPEEFISLLGERGLYSKYLVYRDLRNRGYIVKTGFKYGAEFRLYERGGAPGRTHSAYLVRVISENDTIHALDFSSYVRVAHGVNKKLLMAFLDDEEDITYYLVDWIRP</sequence>
<feature type="chain" id="PRO_0000109473" description="tRNA-splicing endonuclease">
    <location>
        <begin position="1"/>
        <end position="170"/>
    </location>
</feature>
<feature type="active site" evidence="1">
    <location>
        <position position="106"/>
    </location>
</feature>
<feature type="active site" evidence="1">
    <location>
        <position position="116"/>
    </location>
</feature>
<feature type="active site" evidence="1">
    <location>
        <position position="147"/>
    </location>
</feature>
<evidence type="ECO:0000255" key="1">
    <source>
        <dbReference type="HAMAP-Rule" id="MF_01833"/>
    </source>
</evidence>
<accession>O07165</accession>
<organism>
    <name type="scientific">Methanothermobacter thermautotrophicus (strain ATCC 29096 / DSM 1053 / JCM 10044 / NBRC 100330 / Delta H)</name>
    <name type="common">Methanobacterium thermoautotrophicum</name>
    <dbReference type="NCBI Taxonomy" id="187420"/>
    <lineage>
        <taxon>Archaea</taxon>
        <taxon>Methanobacteriati</taxon>
        <taxon>Methanobacteriota</taxon>
        <taxon>Methanomada group</taxon>
        <taxon>Methanobacteria</taxon>
        <taxon>Methanobacteriales</taxon>
        <taxon>Methanobacteriaceae</taxon>
        <taxon>Methanothermobacter</taxon>
    </lineage>
</organism>
<reference key="1">
    <citation type="journal article" date="1997" name="Cell">
        <title>Properties of H. volcanii tRNA intron endonuclease reveal a relationship between the archaeal and eucaryal tRNA intron processing systems.</title>
        <authorList>
            <person name="Kleman-Leyer K."/>
            <person name="Armbruster D.W."/>
            <person name="Daniels C.J."/>
        </authorList>
    </citation>
    <scope>NUCLEOTIDE SEQUENCE [GENOMIC DNA]</scope>
</reference>
<reference key="2">
    <citation type="journal article" date="1997" name="J. Bacteriol.">
        <title>Complete genome sequence of Methanobacterium thermoautotrophicum deltaH: functional analysis and comparative genomics.</title>
        <authorList>
            <person name="Smith D.R."/>
            <person name="Doucette-Stamm L.A."/>
            <person name="Deloughery C."/>
            <person name="Lee H.-M."/>
            <person name="Dubois J."/>
            <person name="Aldredge T."/>
            <person name="Bashirzadeh R."/>
            <person name="Blakely D."/>
            <person name="Cook R."/>
            <person name="Gilbert K."/>
            <person name="Harrison D."/>
            <person name="Hoang L."/>
            <person name="Keagle P."/>
            <person name="Lumm W."/>
            <person name="Pothier B."/>
            <person name="Qiu D."/>
            <person name="Spadafora R."/>
            <person name="Vicare R."/>
            <person name="Wang Y."/>
            <person name="Wierzbowski J."/>
            <person name="Gibson R."/>
            <person name="Jiwani N."/>
            <person name="Caruso A."/>
            <person name="Bush D."/>
            <person name="Safer H."/>
            <person name="Patwell D."/>
            <person name="Prabhakar S."/>
            <person name="McDougall S."/>
            <person name="Shimer G."/>
            <person name="Goyal A."/>
            <person name="Pietrovski S."/>
            <person name="Church G.M."/>
            <person name="Daniels C.J."/>
            <person name="Mao J.-I."/>
            <person name="Rice P."/>
            <person name="Noelling J."/>
            <person name="Reeve J.N."/>
        </authorList>
    </citation>
    <scope>NUCLEOTIDE SEQUENCE [LARGE SCALE GENOMIC DNA]</scope>
    <source>
        <strain>ATCC 29096 / DSM 1053 / JCM 10044 / NBRC 100330 / Delta H</strain>
    </source>
</reference>
<keyword id="KW-0456">Lyase</keyword>
<keyword id="KW-1185">Reference proteome</keyword>
<keyword id="KW-0819">tRNA processing</keyword>
<comment type="function">
    <text evidence="1">Endonuclease that removes tRNA introns. Cleaves pre-tRNA at the 5'- and 3'-splice sites to release the intron. The products are an intron and two tRNA half-molecules bearing 2',3' cyclic phosphate and 5'-OH termini. Recognizes a pseudosymmetric substrate in which 2 bulged loops of 3 bases are separated by a stem of 4 bp.</text>
</comment>
<comment type="catalytic activity">
    <reaction evidence="1">
        <text>pretRNA = a 3'-half-tRNA molecule with a 5'-OH end + a 5'-half-tRNA molecule with a 2',3'-cyclic phosphate end + an intron with a 2',3'-cyclic phosphate and a 5'-hydroxyl terminus.</text>
        <dbReference type="EC" id="4.6.1.16"/>
    </reaction>
</comment>
<comment type="subunit">
    <text evidence="1">Homotetramer; although the tetramer contains four active sites, only two participate in the cleavage. Therefore, it should be considered as a dimer of dimers.</text>
</comment>
<comment type="similarity">
    <text evidence="1">Belongs to the tRNA-intron endonuclease family. Archaeal short subfamily.</text>
</comment>
<proteinExistence type="inferred from homology"/>
<gene>
    <name evidence="1" type="primary">endA</name>
    <name type="ordered locus">MTH_250</name>
</gene>